<name>SYI_HALHL</name>
<sequence length="941" mass="105606">MSEYKHTLNLPHTEFPMRARLAEREPQRLQRWEEEDLYGAIRRARAGRERFILHDGPPYANGDIHIGHAVNKILKDIIVKARTLDGYDAPYIPGWDCHGLPIEHKVEEQAGKPGAELTYAQFRERCRAFAAEQVEGQRQDFKRLGVLGDWERPYLTMDYATEAGILRALARIFEGGHVTQGFKPVHWCADCGSALAEAEVEYEERTSPAVDVRFAVVDELALQQRVLLEGEGVQAGTASVVIWTTTPWTLPANRAVAVHPELEYVVVALDHSERLVLAAELLEATLQRAGVECYEVVGRCRGADLEGLSLQHPFLDRQVPVVLGEHVTTDGGTGCVHTAPGHGQEDFEVGQCYGLEVTNPVDGAGCFFEDTEHFAGLNVFDANPRVVEVLESRGALFHHEKYRHSYPHCWRHKTPVIFRATPQWFIDLDRHGMRECALAGIEGVRWMPDWGQARIDAMVRGRPDWCISRQRHWGVPIAVFIHRRSGEPHPQTPQHMEAVAARMEHEGLEAWWDLDPAELLGDEAAEYEKVTDILDVWFDSGVTHATVLEQREGLQVPADLYLEGSDQHRGWFQSSLLSSAAIRQAAPYRGVLTHGFTVDEQGHKMSKSRGNVVAPQDVMDRLGADILRLWVASADYSGEIAVSDNILQRTADAYRRMRNTARFLLGNLHGFEPGRDALVAEQLLPLDRWAVARTRALQERIVAAYDRYELHRIYHLLHNFCVVDMGGFYLDVLKDRLYTTPADSRARRSGQTAMYHIAEALVRWLAPILSFTADEIWGHLPGERREPVFTAEWYDGLFPLDDEPAEAAFWDRVMEVRTAVSRELERLRNEKVIGANLDAEVDLYVSSALAEELAPLGDELRFVLITSAARIHAATEAPVDAASATLEDGSEVRIAVAASAHDKCPRCWHRSPDIGASDEHPELCGRCVENVAGSGEYRATA</sequence>
<feature type="chain" id="PRO_1000022076" description="Isoleucine--tRNA ligase">
    <location>
        <begin position="1"/>
        <end position="941"/>
    </location>
</feature>
<feature type="short sequence motif" description="'HIGH' region">
    <location>
        <begin position="58"/>
        <end position="68"/>
    </location>
</feature>
<feature type="short sequence motif" description="'KMSKS' region">
    <location>
        <begin position="604"/>
        <end position="608"/>
    </location>
</feature>
<feature type="binding site" evidence="1">
    <location>
        <position position="563"/>
    </location>
    <ligand>
        <name>L-isoleucyl-5'-AMP</name>
        <dbReference type="ChEBI" id="CHEBI:178002"/>
    </ligand>
</feature>
<feature type="binding site" evidence="1">
    <location>
        <position position="607"/>
    </location>
    <ligand>
        <name>ATP</name>
        <dbReference type="ChEBI" id="CHEBI:30616"/>
    </ligand>
</feature>
<feature type="binding site" evidence="1">
    <location>
        <position position="904"/>
    </location>
    <ligand>
        <name>Zn(2+)</name>
        <dbReference type="ChEBI" id="CHEBI:29105"/>
    </ligand>
</feature>
<feature type="binding site" evidence="1">
    <location>
        <position position="907"/>
    </location>
    <ligand>
        <name>Zn(2+)</name>
        <dbReference type="ChEBI" id="CHEBI:29105"/>
    </ligand>
</feature>
<feature type="binding site" evidence="1">
    <location>
        <position position="924"/>
    </location>
    <ligand>
        <name>Zn(2+)</name>
        <dbReference type="ChEBI" id="CHEBI:29105"/>
    </ligand>
</feature>
<feature type="binding site" evidence="1">
    <location>
        <position position="927"/>
    </location>
    <ligand>
        <name>Zn(2+)</name>
        <dbReference type="ChEBI" id="CHEBI:29105"/>
    </ligand>
</feature>
<accession>A1WY38</accession>
<keyword id="KW-0030">Aminoacyl-tRNA synthetase</keyword>
<keyword id="KW-0067">ATP-binding</keyword>
<keyword id="KW-0963">Cytoplasm</keyword>
<keyword id="KW-0436">Ligase</keyword>
<keyword id="KW-0479">Metal-binding</keyword>
<keyword id="KW-0547">Nucleotide-binding</keyword>
<keyword id="KW-0648">Protein biosynthesis</keyword>
<keyword id="KW-1185">Reference proteome</keyword>
<keyword id="KW-0862">Zinc</keyword>
<dbReference type="EC" id="6.1.1.5" evidence="1"/>
<dbReference type="EMBL" id="CP000544">
    <property type="protein sequence ID" value="ABM62600.1"/>
    <property type="molecule type" value="Genomic_DNA"/>
</dbReference>
<dbReference type="RefSeq" id="WP_011814622.1">
    <property type="nucleotide sequence ID" value="NC_008789.1"/>
</dbReference>
<dbReference type="SMR" id="A1WY38"/>
<dbReference type="STRING" id="349124.Hhal_1836"/>
<dbReference type="KEGG" id="hha:Hhal_1836"/>
<dbReference type="eggNOG" id="COG0060">
    <property type="taxonomic scope" value="Bacteria"/>
</dbReference>
<dbReference type="HOGENOM" id="CLU_001493_7_0_6"/>
<dbReference type="OrthoDB" id="9810365at2"/>
<dbReference type="Proteomes" id="UP000000647">
    <property type="component" value="Chromosome"/>
</dbReference>
<dbReference type="GO" id="GO:0005829">
    <property type="term" value="C:cytosol"/>
    <property type="evidence" value="ECO:0007669"/>
    <property type="project" value="TreeGrafter"/>
</dbReference>
<dbReference type="GO" id="GO:0002161">
    <property type="term" value="F:aminoacyl-tRNA deacylase activity"/>
    <property type="evidence" value="ECO:0007669"/>
    <property type="project" value="InterPro"/>
</dbReference>
<dbReference type="GO" id="GO:0005524">
    <property type="term" value="F:ATP binding"/>
    <property type="evidence" value="ECO:0007669"/>
    <property type="project" value="UniProtKB-UniRule"/>
</dbReference>
<dbReference type="GO" id="GO:0004822">
    <property type="term" value="F:isoleucine-tRNA ligase activity"/>
    <property type="evidence" value="ECO:0007669"/>
    <property type="project" value="UniProtKB-UniRule"/>
</dbReference>
<dbReference type="GO" id="GO:0000049">
    <property type="term" value="F:tRNA binding"/>
    <property type="evidence" value="ECO:0007669"/>
    <property type="project" value="InterPro"/>
</dbReference>
<dbReference type="GO" id="GO:0008270">
    <property type="term" value="F:zinc ion binding"/>
    <property type="evidence" value="ECO:0007669"/>
    <property type="project" value="UniProtKB-UniRule"/>
</dbReference>
<dbReference type="GO" id="GO:0006428">
    <property type="term" value="P:isoleucyl-tRNA aminoacylation"/>
    <property type="evidence" value="ECO:0007669"/>
    <property type="project" value="UniProtKB-UniRule"/>
</dbReference>
<dbReference type="CDD" id="cd07960">
    <property type="entry name" value="Anticodon_Ia_Ile_BEm"/>
    <property type="match status" value="1"/>
</dbReference>
<dbReference type="FunFam" id="1.10.730.20:FF:000001">
    <property type="entry name" value="Isoleucine--tRNA ligase"/>
    <property type="match status" value="1"/>
</dbReference>
<dbReference type="FunFam" id="3.40.50.620:FF:000042">
    <property type="entry name" value="Isoleucine--tRNA ligase"/>
    <property type="match status" value="1"/>
</dbReference>
<dbReference type="FunFam" id="3.40.50.620:FF:000048">
    <property type="entry name" value="Isoleucine--tRNA ligase"/>
    <property type="match status" value="1"/>
</dbReference>
<dbReference type="Gene3D" id="1.10.730.20">
    <property type="match status" value="1"/>
</dbReference>
<dbReference type="Gene3D" id="3.40.50.620">
    <property type="entry name" value="HUPs"/>
    <property type="match status" value="2"/>
</dbReference>
<dbReference type="Gene3D" id="3.90.740.10">
    <property type="entry name" value="Valyl/Leucyl/Isoleucyl-tRNA synthetase, editing domain"/>
    <property type="match status" value="1"/>
</dbReference>
<dbReference type="HAMAP" id="MF_02002">
    <property type="entry name" value="Ile_tRNA_synth_type1"/>
    <property type="match status" value="1"/>
</dbReference>
<dbReference type="InterPro" id="IPR001412">
    <property type="entry name" value="aa-tRNA-synth_I_CS"/>
</dbReference>
<dbReference type="InterPro" id="IPR002300">
    <property type="entry name" value="aa-tRNA-synth_Ia"/>
</dbReference>
<dbReference type="InterPro" id="IPR033708">
    <property type="entry name" value="Anticodon_Ile_BEm"/>
</dbReference>
<dbReference type="InterPro" id="IPR002301">
    <property type="entry name" value="Ile-tRNA-ligase"/>
</dbReference>
<dbReference type="InterPro" id="IPR023585">
    <property type="entry name" value="Ile-tRNA-ligase_type1"/>
</dbReference>
<dbReference type="InterPro" id="IPR050081">
    <property type="entry name" value="Ile-tRNA_ligase"/>
</dbReference>
<dbReference type="InterPro" id="IPR013155">
    <property type="entry name" value="M/V/L/I-tRNA-synth_anticd-bd"/>
</dbReference>
<dbReference type="InterPro" id="IPR014729">
    <property type="entry name" value="Rossmann-like_a/b/a_fold"/>
</dbReference>
<dbReference type="InterPro" id="IPR009080">
    <property type="entry name" value="tRNAsynth_Ia_anticodon-bd"/>
</dbReference>
<dbReference type="InterPro" id="IPR009008">
    <property type="entry name" value="Val/Leu/Ile-tRNA-synth_edit"/>
</dbReference>
<dbReference type="InterPro" id="IPR010663">
    <property type="entry name" value="Znf_FPG/IleRS"/>
</dbReference>
<dbReference type="NCBIfam" id="TIGR00392">
    <property type="entry name" value="ileS"/>
    <property type="match status" value="1"/>
</dbReference>
<dbReference type="PANTHER" id="PTHR42765:SF1">
    <property type="entry name" value="ISOLEUCINE--TRNA LIGASE, MITOCHONDRIAL"/>
    <property type="match status" value="1"/>
</dbReference>
<dbReference type="PANTHER" id="PTHR42765">
    <property type="entry name" value="SOLEUCYL-TRNA SYNTHETASE"/>
    <property type="match status" value="1"/>
</dbReference>
<dbReference type="Pfam" id="PF08264">
    <property type="entry name" value="Anticodon_1"/>
    <property type="match status" value="1"/>
</dbReference>
<dbReference type="Pfam" id="PF00133">
    <property type="entry name" value="tRNA-synt_1"/>
    <property type="match status" value="1"/>
</dbReference>
<dbReference type="Pfam" id="PF06827">
    <property type="entry name" value="zf-FPG_IleRS"/>
    <property type="match status" value="1"/>
</dbReference>
<dbReference type="PRINTS" id="PR00984">
    <property type="entry name" value="TRNASYNTHILE"/>
</dbReference>
<dbReference type="SUPFAM" id="SSF47323">
    <property type="entry name" value="Anticodon-binding domain of a subclass of class I aminoacyl-tRNA synthetases"/>
    <property type="match status" value="1"/>
</dbReference>
<dbReference type="SUPFAM" id="SSF52374">
    <property type="entry name" value="Nucleotidylyl transferase"/>
    <property type="match status" value="1"/>
</dbReference>
<dbReference type="SUPFAM" id="SSF50677">
    <property type="entry name" value="ValRS/IleRS/LeuRS editing domain"/>
    <property type="match status" value="1"/>
</dbReference>
<dbReference type="PROSITE" id="PS00178">
    <property type="entry name" value="AA_TRNA_LIGASE_I"/>
    <property type="match status" value="1"/>
</dbReference>
<evidence type="ECO:0000255" key="1">
    <source>
        <dbReference type="HAMAP-Rule" id="MF_02002"/>
    </source>
</evidence>
<reference key="1">
    <citation type="submission" date="2006-12" db="EMBL/GenBank/DDBJ databases">
        <title>Complete sequence of Halorhodospira halophila SL1.</title>
        <authorList>
            <consortium name="US DOE Joint Genome Institute"/>
            <person name="Copeland A."/>
            <person name="Lucas S."/>
            <person name="Lapidus A."/>
            <person name="Barry K."/>
            <person name="Detter J.C."/>
            <person name="Glavina del Rio T."/>
            <person name="Hammon N."/>
            <person name="Israni S."/>
            <person name="Dalin E."/>
            <person name="Tice H."/>
            <person name="Pitluck S."/>
            <person name="Saunders E."/>
            <person name="Brettin T."/>
            <person name="Bruce D."/>
            <person name="Han C."/>
            <person name="Tapia R."/>
            <person name="Schmutz J."/>
            <person name="Larimer F."/>
            <person name="Land M."/>
            <person name="Hauser L."/>
            <person name="Kyrpides N."/>
            <person name="Mikhailova N."/>
            <person name="Hoff W."/>
            <person name="Richardson P."/>
        </authorList>
    </citation>
    <scope>NUCLEOTIDE SEQUENCE [LARGE SCALE GENOMIC DNA]</scope>
    <source>
        <strain>DSM 244 / SL1</strain>
    </source>
</reference>
<gene>
    <name evidence="1" type="primary">ileS</name>
    <name type="ordered locus">Hhal_1836</name>
</gene>
<comment type="function">
    <text evidence="1">Catalyzes the attachment of isoleucine to tRNA(Ile). As IleRS can inadvertently accommodate and process structurally similar amino acids such as valine, to avoid such errors it has two additional distinct tRNA(Ile)-dependent editing activities. One activity is designated as 'pretransfer' editing and involves the hydrolysis of activated Val-AMP. The other activity is designated 'posttransfer' editing and involves deacylation of mischarged Val-tRNA(Ile).</text>
</comment>
<comment type="catalytic activity">
    <reaction evidence="1">
        <text>tRNA(Ile) + L-isoleucine + ATP = L-isoleucyl-tRNA(Ile) + AMP + diphosphate</text>
        <dbReference type="Rhea" id="RHEA:11060"/>
        <dbReference type="Rhea" id="RHEA-COMP:9666"/>
        <dbReference type="Rhea" id="RHEA-COMP:9695"/>
        <dbReference type="ChEBI" id="CHEBI:30616"/>
        <dbReference type="ChEBI" id="CHEBI:33019"/>
        <dbReference type="ChEBI" id="CHEBI:58045"/>
        <dbReference type="ChEBI" id="CHEBI:78442"/>
        <dbReference type="ChEBI" id="CHEBI:78528"/>
        <dbReference type="ChEBI" id="CHEBI:456215"/>
        <dbReference type="EC" id="6.1.1.5"/>
    </reaction>
</comment>
<comment type="cofactor">
    <cofactor evidence="1">
        <name>Zn(2+)</name>
        <dbReference type="ChEBI" id="CHEBI:29105"/>
    </cofactor>
    <text evidence="1">Binds 1 zinc ion per subunit.</text>
</comment>
<comment type="subunit">
    <text evidence="1">Monomer.</text>
</comment>
<comment type="subcellular location">
    <subcellularLocation>
        <location evidence="1">Cytoplasm</location>
    </subcellularLocation>
</comment>
<comment type="domain">
    <text evidence="1">IleRS has two distinct active sites: one for aminoacylation and one for editing. The misactivated valine is translocated from the active site to the editing site, which sterically excludes the correctly activated isoleucine. The single editing site contains two valyl binding pockets, one specific for each substrate (Val-AMP or Val-tRNA(Ile)).</text>
</comment>
<comment type="similarity">
    <text evidence="1">Belongs to the class-I aminoacyl-tRNA synthetase family. IleS type 1 subfamily.</text>
</comment>
<protein>
    <recommendedName>
        <fullName evidence="1">Isoleucine--tRNA ligase</fullName>
        <ecNumber evidence="1">6.1.1.5</ecNumber>
    </recommendedName>
    <alternativeName>
        <fullName evidence="1">Isoleucyl-tRNA synthetase</fullName>
        <shortName evidence="1">IleRS</shortName>
    </alternativeName>
</protein>
<proteinExistence type="inferred from homology"/>
<organism>
    <name type="scientific">Halorhodospira halophila (strain DSM 244 / SL1)</name>
    <name type="common">Ectothiorhodospira halophila (strain DSM 244 / SL1)</name>
    <dbReference type="NCBI Taxonomy" id="349124"/>
    <lineage>
        <taxon>Bacteria</taxon>
        <taxon>Pseudomonadati</taxon>
        <taxon>Pseudomonadota</taxon>
        <taxon>Gammaproteobacteria</taxon>
        <taxon>Chromatiales</taxon>
        <taxon>Ectothiorhodospiraceae</taxon>
        <taxon>Halorhodospira</taxon>
    </lineage>
</organism>